<gene>
    <name type="primary">MT-ND4L</name>
    <name type="synonym">MTND4L</name>
    <name type="synonym">NADH4L</name>
    <name type="synonym">ND4L</name>
</gene>
<reference key="1">
    <citation type="submission" date="2004-10" db="EMBL/GenBank/DDBJ databases">
        <title>Complete sequence of the Yak (Bos grunniens.) mitochondrial genome and its genetic relationship with related species.</title>
        <authorList>
            <person name="Gu Z."/>
            <person name="Zhao X."/>
            <person name="Li N."/>
            <person name="Wu C."/>
        </authorList>
    </citation>
    <scope>NUCLEOTIDE SEQUENCE [GENOMIC DNA]</scope>
</reference>
<comment type="function">
    <text evidence="1">Core subunit of the mitochondrial membrane respiratory chain NADH dehydrogenase (Complex I) which catalyzes electron transfer from NADH through the respiratory chain, using ubiquinone as an electron acceptor. Part of the enzyme membrane arm which is embedded in the lipid bilayer and involved in proton translocation.</text>
</comment>
<comment type="catalytic activity">
    <reaction evidence="1">
        <text>a ubiquinone + NADH + 5 H(+)(in) = a ubiquinol + NAD(+) + 4 H(+)(out)</text>
        <dbReference type="Rhea" id="RHEA:29091"/>
        <dbReference type="Rhea" id="RHEA-COMP:9565"/>
        <dbReference type="Rhea" id="RHEA-COMP:9566"/>
        <dbReference type="ChEBI" id="CHEBI:15378"/>
        <dbReference type="ChEBI" id="CHEBI:16389"/>
        <dbReference type="ChEBI" id="CHEBI:17976"/>
        <dbReference type="ChEBI" id="CHEBI:57540"/>
        <dbReference type="ChEBI" id="CHEBI:57945"/>
        <dbReference type="EC" id="7.1.1.2"/>
    </reaction>
    <physiologicalReaction direction="left-to-right" evidence="1">
        <dbReference type="Rhea" id="RHEA:29092"/>
    </physiologicalReaction>
</comment>
<comment type="subunit">
    <text evidence="2">Core subunit of respiratory chain NADH dehydrogenase (Complex I) which is composed of 45 different subunits.</text>
</comment>
<comment type="subcellular location">
    <subcellularLocation>
        <location evidence="2">Mitochondrion inner membrane</location>
        <topology evidence="3">Multi-pass membrane protein</topology>
    </subcellularLocation>
</comment>
<comment type="similarity">
    <text evidence="4">Belongs to the complex I subunit 4L family.</text>
</comment>
<feature type="chain" id="PRO_0000253526" description="NADH-ubiquinone oxidoreductase chain 4L">
    <location>
        <begin position="1"/>
        <end position="98"/>
    </location>
</feature>
<feature type="transmembrane region" description="Helical" evidence="3">
    <location>
        <begin position="1"/>
        <end position="21"/>
    </location>
</feature>
<feature type="transmembrane region" description="Helical" evidence="3">
    <location>
        <begin position="29"/>
        <end position="49"/>
    </location>
</feature>
<feature type="transmembrane region" description="Helical" evidence="3">
    <location>
        <begin position="61"/>
        <end position="81"/>
    </location>
</feature>
<organism>
    <name type="scientific">Bos mutus grunniens</name>
    <name type="common">Wild yak</name>
    <name type="synonym">Bos grunniens</name>
    <dbReference type="NCBI Taxonomy" id="30521"/>
    <lineage>
        <taxon>Eukaryota</taxon>
        <taxon>Metazoa</taxon>
        <taxon>Chordata</taxon>
        <taxon>Craniata</taxon>
        <taxon>Vertebrata</taxon>
        <taxon>Euteleostomi</taxon>
        <taxon>Mammalia</taxon>
        <taxon>Eutheria</taxon>
        <taxon>Laurasiatheria</taxon>
        <taxon>Artiodactyla</taxon>
        <taxon>Ruminantia</taxon>
        <taxon>Pecora</taxon>
        <taxon>Bovidae</taxon>
        <taxon>Bovinae</taxon>
        <taxon>Bos</taxon>
    </lineage>
</organism>
<evidence type="ECO:0000250" key="1">
    <source>
        <dbReference type="UniProtKB" id="P03901"/>
    </source>
</evidence>
<evidence type="ECO:0000250" key="2">
    <source>
        <dbReference type="UniProtKB" id="P03902"/>
    </source>
</evidence>
<evidence type="ECO:0000255" key="3"/>
<evidence type="ECO:0000305" key="4"/>
<geneLocation type="mitochondrion"/>
<keyword id="KW-0249">Electron transport</keyword>
<keyword id="KW-0472">Membrane</keyword>
<keyword id="KW-0496">Mitochondrion</keyword>
<keyword id="KW-0999">Mitochondrion inner membrane</keyword>
<keyword id="KW-0520">NAD</keyword>
<keyword id="KW-1185">Reference proteome</keyword>
<keyword id="KW-0679">Respiratory chain</keyword>
<keyword id="KW-1278">Translocase</keyword>
<keyword id="KW-0812">Transmembrane</keyword>
<keyword id="KW-1133">Transmembrane helix</keyword>
<keyword id="KW-0813">Transport</keyword>
<keyword id="KW-0830">Ubiquinone</keyword>
<dbReference type="EC" id="7.1.1.2"/>
<dbReference type="EMBL" id="AY684273">
    <property type="protein sequence ID" value="AAU89114.1"/>
    <property type="molecule type" value="Genomic_DNA"/>
</dbReference>
<dbReference type="RefSeq" id="YP_001218799.1">
    <property type="nucleotide sequence ID" value="NC_006380.3"/>
</dbReference>
<dbReference type="SMR" id="Q5Y4Q2"/>
<dbReference type="GeneID" id="3119743"/>
<dbReference type="CTD" id="4539"/>
<dbReference type="Proteomes" id="UP000694520">
    <property type="component" value="Unplaced"/>
</dbReference>
<dbReference type="GO" id="GO:0005743">
    <property type="term" value="C:mitochondrial inner membrane"/>
    <property type="evidence" value="ECO:0000250"/>
    <property type="project" value="UniProtKB"/>
</dbReference>
<dbReference type="GO" id="GO:0045271">
    <property type="term" value="C:respiratory chain complex I"/>
    <property type="evidence" value="ECO:0000250"/>
    <property type="project" value="UniProtKB"/>
</dbReference>
<dbReference type="GO" id="GO:0008137">
    <property type="term" value="F:NADH dehydrogenase (ubiquinone) activity"/>
    <property type="evidence" value="ECO:0000250"/>
    <property type="project" value="UniProtKB"/>
</dbReference>
<dbReference type="GO" id="GO:0042773">
    <property type="term" value="P:ATP synthesis coupled electron transport"/>
    <property type="evidence" value="ECO:0007669"/>
    <property type="project" value="InterPro"/>
</dbReference>
<dbReference type="FunFam" id="1.10.287.3510:FF:000002">
    <property type="entry name" value="NADH-ubiquinone oxidoreductase chain 4L"/>
    <property type="match status" value="1"/>
</dbReference>
<dbReference type="Gene3D" id="1.10.287.3510">
    <property type="match status" value="1"/>
</dbReference>
<dbReference type="InterPro" id="IPR001133">
    <property type="entry name" value="NADH_UbQ_OxRdtase_chain4L/K"/>
</dbReference>
<dbReference type="InterPro" id="IPR039428">
    <property type="entry name" value="NUOK/Mnh_C1-like"/>
</dbReference>
<dbReference type="PANTHER" id="PTHR11434:SF0">
    <property type="entry name" value="NADH-UBIQUINONE OXIDOREDUCTASE CHAIN 4L"/>
    <property type="match status" value="1"/>
</dbReference>
<dbReference type="PANTHER" id="PTHR11434">
    <property type="entry name" value="NADH-UBIQUINONE OXIDOREDUCTASE SUBUNIT ND4L"/>
    <property type="match status" value="1"/>
</dbReference>
<dbReference type="Pfam" id="PF00420">
    <property type="entry name" value="Oxidored_q2"/>
    <property type="match status" value="1"/>
</dbReference>
<sequence>MSMVHMNIMMAFAVSLVGLLMYRSHLMSSLLCLEGMMLSLFVMAALTILNSHFTLASMMPIILLVFAACEAALGLSLLVMVSNTYGTDYVQNLNLLQC</sequence>
<protein>
    <recommendedName>
        <fullName>NADH-ubiquinone oxidoreductase chain 4L</fullName>
        <ecNumber>7.1.1.2</ecNumber>
    </recommendedName>
    <alternativeName>
        <fullName>NADH dehydrogenase subunit 4L</fullName>
    </alternativeName>
</protein>
<name>NU4LM_BOSMU</name>
<accession>Q5Y4Q2</accession>
<proteinExistence type="inferred from homology"/>